<organism>
    <name type="scientific">Chlamydia pneumoniae</name>
    <name type="common">Chlamydophila pneumoniae</name>
    <dbReference type="NCBI Taxonomy" id="83558"/>
    <lineage>
        <taxon>Bacteria</taxon>
        <taxon>Pseudomonadati</taxon>
        <taxon>Chlamydiota</taxon>
        <taxon>Chlamydiia</taxon>
        <taxon>Chlamydiales</taxon>
        <taxon>Chlamydiaceae</taxon>
        <taxon>Chlamydia/Chlamydophila group</taxon>
        <taxon>Chlamydia</taxon>
    </lineage>
</organism>
<accession>Q9Z6Z6</accession>
<accession>Q9JQC6</accession>
<feature type="chain" id="PRO_0000163899" description="tRNA dimethylallyltransferase">
    <location>
        <begin position="1"/>
        <end position="342"/>
    </location>
</feature>
<feature type="region of interest" description="Interaction with substrate tRNA" evidence="1">
    <location>
        <begin position="64"/>
        <end position="67"/>
    </location>
</feature>
<feature type="binding site" evidence="1">
    <location>
        <begin position="39"/>
        <end position="46"/>
    </location>
    <ligand>
        <name>ATP</name>
        <dbReference type="ChEBI" id="CHEBI:30616"/>
    </ligand>
</feature>
<feature type="binding site" evidence="1">
    <location>
        <begin position="41"/>
        <end position="46"/>
    </location>
    <ligand>
        <name>substrate</name>
    </ligand>
</feature>
<feature type="site" description="Interaction with substrate tRNA" evidence="1">
    <location>
        <position position="130"/>
    </location>
</feature>
<feature type="site" description="Interaction with substrate tRNA" evidence="1">
    <location>
        <position position="152"/>
    </location>
</feature>
<protein>
    <recommendedName>
        <fullName evidence="1">tRNA dimethylallyltransferase</fullName>
        <ecNumber evidence="1">2.5.1.75</ecNumber>
    </recommendedName>
    <alternativeName>
        <fullName evidence="1">Dimethylallyl diphosphate:tRNA dimethylallyltransferase</fullName>
        <shortName evidence="1">DMAPP:tRNA dimethylallyltransferase</shortName>
        <shortName evidence="1">DMATase</shortName>
    </alternativeName>
    <alternativeName>
        <fullName evidence="1">Isopentenyl-diphosphate:tRNA isopentenyltransferase</fullName>
        <shortName evidence="1">IPP transferase</shortName>
        <shortName evidence="1">IPPT</shortName>
        <shortName evidence="1">IPTase</shortName>
    </alternativeName>
</protein>
<sequence length="342" mass="39069">MLPFEFEFNTTSSPECDVCLDPQKLFVKLFKRTIVLLSGPTGSGKTDVSLALAPMIDGEIVSVDSMQVYQGMDIGTAKVSLKARQEIPHHLIDIRHVQEPFNVVDFYYEAIQACQNILSRNKVPILVGGSGFYFHAFLSGPPKGPAADPQIREQLEAIAEEHGVSALYEDLLLKDPEYAQTITKNDKNKIIRGLEIIQLTGKKVSDHEWDIVPKASREYCCRAWFLSPETEFLKNNIQMRCEAMLQEGLLEEVRGLLNQGIRENPSAFKAIGYREWIEFLDNGEKLEEYEETKRKFVSNSWHYTKKQKTWFKRYSIFRELPTLGLSSDAIAQKIAKDYLLYS</sequence>
<gene>
    <name evidence="1" type="primary">miaA</name>
    <name type="ordered locus">CPn_0910</name>
    <name type="ordered locus">CP_0956</name>
    <name type="ordered locus">CpB0943</name>
</gene>
<comment type="function">
    <text evidence="1">Catalyzes the transfer of a dimethylallyl group onto the adenine at position 37 in tRNAs that read codons beginning with uridine, leading to the formation of N6-(dimethylallyl)adenosine (i(6)A).</text>
</comment>
<comment type="catalytic activity">
    <reaction evidence="1">
        <text>adenosine(37) in tRNA + dimethylallyl diphosphate = N(6)-dimethylallyladenosine(37) in tRNA + diphosphate</text>
        <dbReference type="Rhea" id="RHEA:26482"/>
        <dbReference type="Rhea" id="RHEA-COMP:10162"/>
        <dbReference type="Rhea" id="RHEA-COMP:10375"/>
        <dbReference type="ChEBI" id="CHEBI:33019"/>
        <dbReference type="ChEBI" id="CHEBI:57623"/>
        <dbReference type="ChEBI" id="CHEBI:74411"/>
        <dbReference type="ChEBI" id="CHEBI:74415"/>
        <dbReference type="EC" id="2.5.1.75"/>
    </reaction>
</comment>
<comment type="cofactor">
    <cofactor evidence="1">
        <name>Mg(2+)</name>
        <dbReference type="ChEBI" id="CHEBI:18420"/>
    </cofactor>
</comment>
<comment type="subunit">
    <text evidence="1">Monomer.</text>
</comment>
<comment type="similarity">
    <text evidence="1">Belongs to the IPP transferase family.</text>
</comment>
<keyword id="KW-0067">ATP-binding</keyword>
<keyword id="KW-0460">Magnesium</keyword>
<keyword id="KW-0547">Nucleotide-binding</keyword>
<keyword id="KW-0808">Transferase</keyword>
<keyword id="KW-0819">tRNA processing</keyword>
<reference key="1">
    <citation type="journal article" date="1999" name="Nat. Genet.">
        <title>Comparative genomes of Chlamydia pneumoniae and C. trachomatis.</title>
        <authorList>
            <person name="Kalman S."/>
            <person name="Mitchell W.P."/>
            <person name="Marathe R."/>
            <person name="Lammel C.J."/>
            <person name="Fan J."/>
            <person name="Hyman R.W."/>
            <person name="Olinger L."/>
            <person name="Grimwood J."/>
            <person name="Davis R.W."/>
            <person name="Stephens R.S."/>
        </authorList>
    </citation>
    <scope>NUCLEOTIDE SEQUENCE [LARGE SCALE GENOMIC DNA]</scope>
    <source>
        <strain>CWL029</strain>
    </source>
</reference>
<reference key="2">
    <citation type="journal article" date="2000" name="Nucleic Acids Res.">
        <title>Genome sequences of Chlamydia trachomatis MoPn and Chlamydia pneumoniae AR39.</title>
        <authorList>
            <person name="Read T.D."/>
            <person name="Brunham R.C."/>
            <person name="Shen C."/>
            <person name="Gill S.R."/>
            <person name="Heidelberg J.F."/>
            <person name="White O."/>
            <person name="Hickey E.K."/>
            <person name="Peterson J.D."/>
            <person name="Utterback T.R."/>
            <person name="Berry K.J."/>
            <person name="Bass S."/>
            <person name="Linher K.D."/>
            <person name="Weidman J.F."/>
            <person name="Khouri H.M."/>
            <person name="Craven B."/>
            <person name="Bowman C."/>
            <person name="Dodson R.J."/>
            <person name="Gwinn M.L."/>
            <person name="Nelson W.C."/>
            <person name="DeBoy R.T."/>
            <person name="Kolonay J.F."/>
            <person name="McClarty G."/>
            <person name="Salzberg S.L."/>
            <person name="Eisen J.A."/>
            <person name="Fraser C.M."/>
        </authorList>
    </citation>
    <scope>NUCLEOTIDE SEQUENCE [LARGE SCALE GENOMIC DNA]</scope>
    <source>
        <strain>AR39</strain>
    </source>
</reference>
<reference key="3">
    <citation type="journal article" date="2000" name="Nucleic Acids Res.">
        <title>Comparison of whole genome sequences of Chlamydia pneumoniae J138 from Japan and CWL029 from USA.</title>
        <authorList>
            <person name="Shirai M."/>
            <person name="Hirakawa H."/>
            <person name="Kimoto M."/>
            <person name="Tabuchi M."/>
            <person name="Kishi F."/>
            <person name="Ouchi K."/>
            <person name="Shiba T."/>
            <person name="Ishii K."/>
            <person name="Hattori M."/>
            <person name="Kuhara S."/>
            <person name="Nakazawa T."/>
        </authorList>
    </citation>
    <scope>NUCLEOTIDE SEQUENCE [LARGE SCALE GENOMIC DNA]</scope>
    <source>
        <strain>J138</strain>
    </source>
</reference>
<reference key="4">
    <citation type="submission" date="2002-05" db="EMBL/GenBank/DDBJ databases">
        <title>The genome sequence of Chlamydia pneumoniae TW183 and comparison with other Chlamydia strains based on whole genome sequence analysis.</title>
        <authorList>
            <person name="Geng M.M."/>
            <person name="Schuhmacher A."/>
            <person name="Muehldorfer I."/>
            <person name="Bensch K.W."/>
            <person name="Schaefer K.P."/>
            <person name="Schneider S."/>
            <person name="Pohl T."/>
            <person name="Essig A."/>
            <person name="Marre R."/>
            <person name="Melchers K."/>
        </authorList>
    </citation>
    <scope>NUCLEOTIDE SEQUENCE [LARGE SCALE GENOMIC DNA]</scope>
    <source>
        <strain>TW-183</strain>
    </source>
</reference>
<evidence type="ECO:0000255" key="1">
    <source>
        <dbReference type="HAMAP-Rule" id="MF_00185"/>
    </source>
</evidence>
<proteinExistence type="inferred from homology"/>
<name>MIAA_CHLPN</name>
<dbReference type="EC" id="2.5.1.75" evidence="1"/>
<dbReference type="EMBL" id="AE001363">
    <property type="protein sequence ID" value="AAD19048.1"/>
    <property type="molecule type" value="Genomic_DNA"/>
</dbReference>
<dbReference type="EMBL" id="AE002161">
    <property type="protein sequence ID" value="AAF38737.1"/>
    <property type="molecule type" value="Genomic_DNA"/>
</dbReference>
<dbReference type="EMBL" id="BA000008">
    <property type="protein sequence ID" value="BAA99118.1"/>
    <property type="molecule type" value="Genomic_DNA"/>
</dbReference>
<dbReference type="EMBL" id="AE009440">
    <property type="protein sequence ID" value="AAP98871.1"/>
    <property type="molecule type" value="Genomic_DNA"/>
</dbReference>
<dbReference type="PIR" id="D86604">
    <property type="entry name" value="D86604"/>
</dbReference>
<dbReference type="PIR" id="E72019">
    <property type="entry name" value="E72019"/>
</dbReference>
<dbReference type="RefSeq" id="NP_225105.1">
    <property type="nucleotide sequence ID" value="NC_000922.1"/>
</dbReference>
<dbReference type="RefSeq" id="WP_010883545.1">
    <property type="nucleotide sequence ID" value="NZ_LN847257.1"/>
</dbReference>
<dbReference type="SMR" id="Q9Z6Z6"/>
<dbReference type="STRING" id="406984.CPK_ORF00323"/>
<dbReference type="GeneID" id="45050966"/>
<dbReference type="KEGG" id="cpa:CP_0956"/>
<dbReference type="KEGG" id="cpj:miaA"/>
<dbReference type="KEGG" id="cpn:CPn_0910"/>
<dbReference type="KEGG" id="cpt:CpB0943"/>
<dbReference type="PATRIC" id="fig|115713.3.peg.991"/>
<dbReference type="eggNOG" id="COG0324">
    <property type="taxonomic scope" value="Bacteria"/>
</dbReference>
<dbReference type="HOGENOM" id="CLU_032616_0_1_0"/>
<dbReference type="OrthoDB" id="9776390at2"/>
<dbReference type="Proteomes" id="UP000000583">
    <property type="component" value="Chromosome"/>
</dbReference>
<dbReference type="Proteomes" id="UP000000801">
    <property type="component" value="Chromosome"/>
</dbReference>
<dbReference type="GO" id="GO:0005524">
    <property type="term" value="F:ATP binding"/>
    <property type="evidence" value="ECO:0007669"/>
    <property type="project" value="UniProtKB-UniRule"/>
</dbReference>
<dbReference type="GO" id="GO:0052381">
    <property type="term" value="F:tRNA dimethylallyltransferase activity"/>
    <property type="evidence" value="ECO:0007669"/>
    <property type="project" value="UniProtKB-UniRule"/>
</dbReference>
<dbReference type="GO" id="GO:0006400">
    <property type="term" value="P:tRNA modification"/>
    <property type="evidence" value="ECO:0007669"/>
    <property type="project" value="TreeGrafter"/>
</dbReference>
<dbReference type="Gene3D" id="1.10.20.140">
    <property type="match status" value="1"/>
</dbReference>
<dbReference type="Gene3D" id="3.40.50.300">
    <property type="entry name" value="P-loop containing nucleotide triphosphate hydrolases"/>
    <property type="match status" value="1"/>
</dbReference>
<dbReference type="HAMAP" id="MF_00185">
    <property type="entry name" value="IPP_trans"/>
    <property type="match status" value="1"/>
</dbReference>
<dbReference type="InterPro" id="IPR039657">
    <property type="entry name" value="Dimethylallyltransferase"/>
</dbReference>
<dbReference type="InterPro" id="IPR018022">
    <property type="entry name" value="IPT"/>
</dbReference>
<dbReference type="InterPro" id="IPR027417">
    <property type="entry name" value="P-loop_NTPase"/>
</dbReference>
<dbReference type="NCBIfam" id="TIGR00174">
    <property type="entry name" value="miaA"/>
    <property type="match status" value="1"/>
</dbReference>
<dbReference type="PANTHER" id="PTHR11088">
    <property type="entry name" value="TRNA DIMETHYLALLYLTRANSFERASE"/>
    <property type="match status" value="1"/>
</dbReference>
<dbReference type="PANTHER" id="PTHR11088:SF60">
    <property type="entry name" value="TRNA DIMETHYLALLYLTRANSFERASE"/>
    <property type="match status" value="1"/>
</dbReference>
<dbReference type="Pfam" id="PF01715">
    <property type="entry name" value="IPPT"/>
    <property type="match status" value="1"/>
</dbReference>
<dbReference type="SUPFAM" id="SSF52540">
    <property type="entry name" value="P-loop containing nucleoside triphosphate hydrolases"/>
    <property type="match status" value="1"/>
</dbReference>